<gene>
    <name evidence="1" type="primary">lexA</name>
    <name type="ordered locus">MS0744</name>
</gene>
<protein>
    <recommendedName>
        <fullName evidence="1">LexA repressor</fullName>
        <ecNumber evidence="1">3.4.21.88</ecNumber>
    </recommendedName>
</protein>
<dbReference type="EC" id="3.4.21.88" evidence="1"/>
<dbReference type="EMBL" id="AE016827">
    <property type="protein sequence ID" value="AAU37351.1"/>
    <property type="status" value="ALT_INIT"/>
    <property type="molecule type" value="Genomic_DNA"/>
</dbReference>
<dbReference type="RefSeq" id="WP_041639607.1">
    <property type="nucleotide sequence ID" value="NC_006300.1"/>
</dbReference>
<dbReference type="SMR" id="Q65UK9"/>
<dbReference type="STRING" id="221988.MS0744"/>
<dbReference type="MEROPS" id="S24.001"/>
<dbReference type="KEGG" id="msu:MS0744"/>
<dbReference type="eggNOG" id="COG1974">
    <property type="taxonomic scope" value="Bacteria"/>
</dbReference>
<dbReference type="HOGENOM" id="CLU_066192_45_3_6"/>
<dbReference type="OrthoDB" id="9802364at2"/>
<dbReference type="Proteomes" id="UP000000607">
    <property type="component" value="Chromosome"/>
</dbReference>
<dbReference type="GO" id="GO:0003677">
    <property type="term" value="F:DNA binding"/>
    <property type="evidence" value="ECO:0007669"/>
    <property type="project" value="UniProtKB-UniRule"/>
</dbReference>
<dbReference type="GO" id="GO:0004252">
    <property type="term" value="F:serine-type endopeptidase activity"/>
    <property type="evidence" value="ECO:0007669"/>
    <property type="project" value="UniProtKB-UniRule"/>
</dbReference>
<dbReference type="GO" id="GO:0006281">
    <property type="term" value="P:DNA repair"/>
    <property type="evidence" value="ECO:0007669"/>
    <property type="project" value="UniProtKB-UniRule"/>
</dbReference>
<dbReference type="GO" id="GO:0006260">
    <property type="term" value="P:DNA replication"/>
    <property type="evidence" value="ECO:0007669"/>
    <property type="project" value="UniProtKB-UniRule"/>
</dbReference>
<dbReference type="GO" id="GO:0045892">
    <property type="term" value="P:negative regulation of DNA-templated transcription"/>
    <property type="evidence" value="ECO:0007669"/>
    <property type="project" value="UniProtKB-UniRule"/>
</dbReference>
<dbReference type="GO" id="GO:0006508">
    <property type="term" value="P:proteolysis"/>
    <property type="evidence" value="ECO:0007669"/>
    <property type="project" value="InterPro"/>
</dbReference>
<dbReference type="GO" id="GO:0009432">
    <property type="term" value="P:SOS response"/>
    <property type="evidence" value="ECO:0007669"/>
    <property type="project" value="UniProtKB-UniRule"/>
</dbReference>
<dbReference type="CDD" id="cd06529">
    <property type="entry name" value="S24_LexA-like"/>
    <property type="match status" value="1"/>
</dbReference>
<dbReference type="FunFam" id="1.10.10.10:FF:000009">
    <property type="entry name" value="LexA repressor"/>
    <property type="match status" value="1"/>
</dbReference>
<dbReference type="FunFam" id="2.10.109.10:FF:000001">
    <property type="entry name" value="LexA repressor"/>
    <property type="match status" value="1"/>
</dbReference>
<dbReference type="Gene3D" id="2.10.109.10">
    <property type="entry name" value="Umud Fragment, subunit A"/>
    <property type="match status" value="1"/>
</dbReference>
<dbReference type="Gene3D" id="1.10.10.10">
    <property type="entry name" value="Winged helix-like DNA-binding domain superfamily/Winged helix DNA-binding domain"/>
    <property type="match status" value="1"/>
</dbReference>
<dbReference type="HAMAP" id="MF_00015">
    <property type="entry name" value="LexA"/>
    <property type="match status" value="1"/>
</dbReference>
<dbReference type="InterPro" id="IPR006200">
    <property type="entry name" value="LexA"/>
</dbReference>
<dbReference type="InterPro" id="IPR039418">
    <property type="entry name" value="LexA-like"/>
</dbReference>
<dbReference type="InterPro" id="IPR036286">
    <property type="entry name" value="LexA/Signal_pep-like_sf"/>
</dbReference>
<dbReference type="InterPro" id="IPR006199">
    <property type="entry name" value="LexA_DNA-bd_dom"/>
</dbReference>
<dbReference type="InterPro" id="IPR050077">
    <property type="entry name" value="LexA_repressor"/>
</dbReference>
<dbReference type="InterPro" id="IPR006197">
    <property type="entry name" value="Peptidase_S24_LexA"/>
</dbReference>
<dbReference type="InterPro" id="IPR015927">
    <property type="entry name" value="Peptidase_S24_S26A/B/C"/>
</dbReference>
<dbReference type="InterPro" id="IPR036388">
    <property type="entry name" value="WH-like_DNA-bd_sf"/>
</dbReference>
<dbReference type="InterPro" id="IPR036390">
    <property type="entry name" value="WH_DNA-bd_sf"/>
</dbReference>
<dbReference type="NCBIfam" id="TIGR00498">
    <property type="entry name" value="lexA"/>
    <property type="match status" value="1"/>
</dbReference>
<dbReference type="PANTHER" id="PTHR33516">
    <property type="entry name" value="LEXA REPRESSOR"/>
    <property type="match status" value="1"/>
</dbReference>
<dbReference type="PANTHER" id="PTHR33516:SF2">
    <property type="entry name" value="LEXA REPRESSOR-RELATED"/>
    <property type="match status" value="1"/>
</dbReference>
<dbReference type="Pfam" id="PF01726">
    <property type="entry name" value="LexA_DNA_bind"/>
    <property type="match status" value="1"/>
</dbReference>
<dbReference type="Pfam" id="PF00717">
    <property type="entry name" value="Peptidase_S24"/>
    <property type="match status" value="1"/>
</dbReference>
<dbReference type="PRINTS" id="PR00726">
    <property type="entry name" value="LEXASERPTASE"/>
</dbReference>
<dbReference type="SUPFAM" id="SSF51306">
    <property type="entry name" value="LexA/Signal peptidase"/>
    <property type="match status" value="1"/>
</dbReference>
<dbReference type="SUPFAM" id="SSF46785">
    <property type="entry name" value="Winged helix' DNA-binding domain"/>
    <property type="match status" value="1"/>
</dbReference>
<name>LEXA_MANSM</name>
<proteinExistence type="inferred from homology"/>
<reference key="1">
    <citation type="journal article" date="2004" name="Nat. Biotechnol.">
        <title>The genome sequence of the capnophilic rumen bacterium Mannheimia succiniciproducens.</title>
        <authorList>
            <person name="Hong S.H."/>
            <person name="Kim J.S."/>
            <person name="Lee S.Y."/>
            <person name="In Y.H."/>
            <person name="Choi S.S."/>
            <person name="Rih J.-K."/>
            <person name="Kim C.H."/>
            <person name="Jeong H."/>
            <person name="Hur C.G."/>
            <person name="Kim J.J."/>
        </authorList>
    </citation>
    <scope>NUCLEOTIDE SEQUENCE [LARGE SCALE GENOMIC DNA]</scope>
    <source>
        <strain>KCTC 0769BP / MBEL55E</strain>
    </source>
</reference>
<keyword id="KW-0068">Autocatalytic cleavage</keyword>
<keyword id="KW-0227">DNA damage</keyword>
<keyword id="KW-0234">DNA repair</keyword>
<keyword id="KW-0235">DNA replication</keyword>
<keyword id="KW-0238">DNA-binding</keyword>
<keyword id="KW-0378">Hydrolase</keyword>
<keyword id="KW-0678">Repressor</keyword>
<keyword id="KW-0742">SOS response</keyword>
<keyword id="KW-0804">Transcription</keyword>
<keyword id="KW-0805">Transcription regulation</keyword>
<organism>
    <name type="scientific">Mannheimia succiniciproducens (strain KCTC 0769BP / MBEL55E)</name>
    <dbReference type="NCBI Taxonomy" id="221988"/>
    <lineage>
        <taxon>Bacteria</taxon>
        <taxon>Pseudomonadati</taxon>
        <taxon>Pseudomonadota</taxon>
        <taxon>Gammaproteobacteria</taxon>
        <taxon>Pasteurellales</taxon>
        <taxon>Pasteurellaceae</taxon>
        <taxon>Basfia</taxon>
    </lineage>
</organism>
<sequence>MKPIKALTARQQEVFNFLKHHIETTGMPPTRAEISRELGFRSPNAAEEYLKALARKGVVEILSGTSRGIRLLVDTEESANDEDAGLPLIGRVAAGEPILAEQHIEGTYKVDADMFKPQADFLLKVYGQSMKDIGILDGDLLAVHSTKDVRNGQVIVARIEDEVTVKRLERKGDVVYLHAENEEFKPIVVNLKEQPNFEIEGIAVGIIRNNAWM</sequence>
<comment type="function">
    <text evidence="1">Represses a number of genes involved in the response to DNA damage (SOS response), including recA and lexA. In the presence of single-stranded DNA, RecA interacts with LexA causing an autocatalytic cleavage which disrupts the DNA-binding part of LexA, leading to derepression of the SOS regulon and eventually DNA repair.</text>
</comment>
<comment type="catalytic activity">
    <reaction evidence="1">
        <text>Hydrolysis of Ala-|-Gly bond in repressor LexA.</text>
        <dbReference type="EC" id="3.4.21.88"/>
    </reaction>
</comment>
<comment type="subunit">
    <text evidence="1">Homodimer.</text>
</comment>
<comment type="similarity">
    <text evidence="1">Belongs to the peptidase S24 family.</text>
</comment>
<comment type="sequence caution" evidence="2">
    <conflict type="erroneous initiation">
        <sequence resource="EMBL-CDS" id="AAU37351"/>
    </conflict>
</comment>
<feature type="chain" id="PRO_0000170054" description="LexA repressor">
    <location>
        <begin position="1"/>
        <end position="213"/>
    </location>
</feature>
<feature type="DNA-binding region" description="H-T-H motif" evidence="1">
    <location>
        <begin position="31"/>
        <end position="51"/>
    </location>
</feature>
<feature type="active site" description="For autocatalytic cleavage activity" evidence="1">
    <location>
        <position position="129"/>
    </location>
</feature>
<feature type="active site" description="For autocatalytic cleavage activity" evidence="1">
    <location>
        <position position="166"/>
    </location>
</feature>
<feature type="site" description="Cleavage; by autolysis" evidence="1">
    <location>
        <begin position="94"/>
        <end position="95"/>
    </location>
</feature>
<accession>Q65UK9</accession>
<evidence type="ECO:0000255" key="1">
    <source>
        <dbReference type="HAMAP-Rule" id="MF_00015"/>
    </source>
</evidence>
<evidence type="ECO:0000305" key="2"/>